<evidence type="ECO:0000255" key="1">
    <source>
        <dbReference type="HAMAP-Rule" id="MF_00281"/>
    </source>
</evidence>
<protein>
    <recommendedName>
        <fullName evidence="1">Phenylalanine--tRNA ligase alpha subunit</fullName>
        <ecNumber evidence="1">6.1.1.20</ecNumber>
    </recommendedName>
    <alternativeName>
        <fullName evidence="1">Phenylalanyl-tRNA synthetase alpha subunit</fullName>
        <shortName evidence="1">PheRS</shortName>
    </alternativeName>
</protein>
<name>SYFA_BURP1</name>
<organism>
    <name type="scientific">Burkholderia pseudomallei (strain 1710b)</name>
    <dbReference type="NCBI Taxonomy" id="320372"/>
    <lineage>
        <taxon>Bacteria</taxon>
        <taxon>Pseudomonadati</taxon>
        <taxon>Pseudomonadota</taxon>
        <taxon>Betaproteobacteria</taxon>
        <taxon>Burkholderiales</taxon>
        <taxon>Burkholderiaceae</taxon>
        <taxon>Burkholderia</taxon>
        <taxon>pseudomallei group</taxon>
    </lineage>
</organism>
<proteinExistence type="inferred from homology"/>
<comment type="catalytic activity">
    <reaction evidence="1">
        <text>tRNA(Phe) + L-phenylalanine + ATP = L-phenylalanyl-tRNA(Phe) + AMP + diphosphate + H(+)</text>
        <dbReference type="Rhea" id="RHEA:19413"/>
        <dbReference type="Rhea" id="RHEA-COMP:9668"/>
        <dbReference type="Rhea" id="RHEA-COMP:9699"/>
        <dbReference type="ChEBI" id="CHEBI:15378"/>
        <dbReference type="ChEBI" id="CHEBI:30616"/>
        <dbReference type="ChEBI" id="CHEBI:33019"/>
        <dbReference type="ChEBI" id="CHEBI:58095"/>
        <dbReference type="ChEBI" id="CHEBI:78442"/>
        <dbReference type="ChEBI" id="CHEBI:78531"/>
        <dbReference type="ChEBI" id="CHEBI:456215"/>
        <dbReference type="EC" id="6.1.1.20"/>
    </reaction>
</comment>
<comment type="cofactor">
    <cofactor evidence="1">
        <name>Mg(2+)</name>
        <dbReference type="ChEBI" id="CHEBI:18420"/>
    </cofactor>
    <text evidence="1">Binds 2 magnesium ions per tetramer.</text>
</comment>
<comment type="subunit">
    <text evidence="1">Tetramer of two alpha and two beta subunits.</text>
</comment>
<comment type="subcellular location">
    <subcellularLocation>
        <location evidence="1">Cytoplasm</location>
    </subcellularLocation>
</comment>
<comment type="similarity">
    <text evidence="1">Belongs to the class-II aminoacyl-tRNA synthetase family. Phe-tRNA synthetase alpha subunit type 1 subfamily.</text>
</comment>
<dbReference type="EC" id="6.1.1.20" evidence="1"/>
<dbReference type="EMBL" id="CP000124">
    <property type="protein sequence ID" value="ABA47897.1"/>
    <property type="molecule type" value="Genomic_DNA"/>
</dbReference>
<dbReference type="RefSeq" id="WP_004191909.1">
    <property type="nucleotide sequence ID" value="NC_007434.1"/>
</dbReference>
<dbReference type="SMR" id="Q3JT08"/>
<dbReference type="EnsemblBacteria" id="ABA47897">
    <property type="protein sequence ID" value="ABA47897"/>
    <property type="gene ID" value="BURPS1710b_1894"/>
</dbReference>
<dbReference type="GeneID" id="92978835"/>
<dbReference type="KEGG" id="bpm:BURPS1710b_1894"/>
<dbReference type="HOGENOM" id="CLU_025086_0_1_4"/>
<dbReference type="Proteomes" id="UP000002700">
    <property type="component" value="Chromosome I"/>
</dbReference>
<dbReference type="GO" id="GO:0005737">
    <property type="term" value="C:cytoplasm"/>
    <property type="evidence" value="ECO:0007669"/>
    <property type="project" value="UniProtKB-SubCell"/>
</dbReference>
<dbReference type="GO" id="GO:0005524">
    <property type="term" value="F:ATP binding"/>
    <property type="evidence" value="ECO:0007669"/>
    <property type="project" value="UniProtKB-UniRule"/>
</dbReference>
<dbReference type="GO" id="GO:0000287">
    <property type="term" value="F:magnesium ion binding"/>
    <property type="evidence" value="ECO:0007669"/>
    <property type="project" value="UniProtKB-UniRule"/>
</dbReference>
<dbReference type="GO" id="GO:0004826">
    <property type="term" value="F:phenylalanine-tRNA ligase activity"/>
    <property type="evidence" value="ECO:0007669"/>
    <property type="project" value="UniProtKB-UniRule"/>
</dbReference>
<dbReference type="GO" id="GO:0000049">
    <property type="term" value="F:tRNA binding"/>
    <property type="evidence" value="ECO:0007669"/>
    <property type="project" value="InterPro"/>
</dbReference>
<dbReference type="GO" id="GO:0006432">
    <property type="term" value="P:phenylalanyl-tRNA aminoacylation"/>
    <property type="evidence" value="ECO:0007669"/>
    <property type="project" value="UniProtKB-UniRule"/>
</dbReference>
<dbReference type="CDD" id="cd00496">
    <property type="entry name" value="PheRS_alpha_core"/>
    <property type="match status" value="1"/>
</dbReference>
<dbReference type="FunFam" id="3.30.930.10:FF:000003">
    <property type="entry name" value="Phenylalanine--tRNA ligase alpha subunit"/>
    <property type="match status" value="1"/>
</dbReference>
<dbReference type="Gene3D" id="3.30.930.10">
    <property type="entry name" value="Bira Bifunctional Protein, Domain 2"/>
    <property type="match status" value="1"/>
</dbReference>
<dbReference type="HAMAP" id="MF_00281">
    <property type="entry name" value="Phe_tRNA_synth_alpha1"/>
    <property type="match status" value="1"/>
</dbReference>
<dbReference type="InterPro" id="IPR006195">
    <property type="entry name" value="aa-tRNA-synth_II"/>
</dbReference>
<dbReference type="InterPro" id="IPR045864">
    <property type="entry name" value="aa-tRNA-synth_II/BPL/LPL"/>
</dbReference>
<dbReference type="InterPro" id="IPR004529">
    <property type="entry name" value="Phe-tRNA-synth_IIc_asu"/>
</dbReference>
<dbReference type="InterPro" id="IPR004188">
    <property type="entry name" value="Phe-tRNA_ligase_II_N"/>
</dbReference>
<dbReference type="InterPro" id="IPR022911">
    <property type="entry name" value="Phe_tRNA_ligase_alpha1_bac"/>
</dbReference>
<dbReference type="InterPro" id="IPR002319">
    <property type="entry name" value="Phenylalanyl-tRNA_Synthase"/>
</dbReference>
<dbReference type="InterPro" id="IPR010978">
    <property type="entry name" value="tRNA-bd_arm"/>
</dbReference>
<dbReference type="NCBIfam" id="TIGR00468">
    <property type="entry name" value="pheS"/>
    <property type="match status" value="1"/>
</dbReference>
<dbReference type="PANTHER" id="PTHR11538:SF41">
    <property type="entry name" value="PHENYLALANINE--TRNA LIGASE, MITOCHONDRIAL"/>
    <property type="match status" value="1"/>
</dbReference>
<dbReference type="PANTHER" id="PTHR11538">
    <property type="entry name" value="PHENYLALANYL-TRNA SYNTHETASE"/>
    <property type="match status" value="1"/>
</dbReference>
<dbReference type="Pfam" id="PF02912">
    <property type="entry name" value="Phe_tRNA-synt_N"/>
    <property type="match status" value="1"/>
</dbReference>
<dbReference type="Pfam" id="PF01409">
    <property type="entry name" value="tRNA-synt_2d"/>
    <property type="match status" value="1"/>
</dbReference>
<dbReference type="SUPFAM" id="SSF55681">
    <property type="entry name" value="Class II aaRS and biotin synthetases"/>
    <property type="match status" value="1"/>
</dbReference>
<dbReference type="SUPFAM" id="SSF46589">
    <property type="entry name" value="tRNA-binding arm"/>
    <property type="match status" value="1"/>
</dbReference>
<dbReference type="PROSITE" id="PS50862">
    <property type="entry name" value="AA_TRNA_LIGASE_II"/>
    <property type="match status" value="1"/>
</dbReference>
<reference key="1">
    <citation type="journal article" date="2010" name="Genome Biol. Evol.">
        <title>Continuing evolution of Burkholderia mallei through genome reduction and large-scale rearrangements.</title>
        <authorList>
            <person name="Losada L."/>
            <person name="Ronning C.M."/>
            <person name="DeShazer D."/>
            <person name="Woods D."/>
            <person name="Fedorova N."/>
            <person name="Kim H.S."/>
            <person name="Shabalina S.A."/>
            <person name="Pearson T.R."/>
            <person name="Brinkac L."/>
            <person name="Tan P."/>
            <person name="Nandi T."/>
            <person name="Crabtree J."/>
            <person name="Badger J."/>
            <person name="Beckstrom-Sternberg S."/>
            <person name="Saqib M."/>
            <person name="Schutzer S.E."/>
            <person name="Keim P."/>
            <person name="Nierman W.C."/>
        </authorList>
    </citation>
    <scope>NUCLEOTIDE SEQUENCE [LARGE SCALE GENOMIC DNA]</scope>
    <source>
        <strain>1710b</strain>
    </source>
</reference>
<accession>Q3JT08</accession>
<gene>
    <name evidence="1" type="primary">pheS</name>
    <name type="ordered locus">BURPS1710b_1894</name>
</gene>
<sequence>MDLDQIVADAQQSFEGAADITTLENEKARFLGKSGALTELLKGLGKLDPETRKTEGARINVAKQQVEAALNARRQALADALLNQRLAAEAIDVTLPGRGAGAGSLHPVMRTWERVEQIFRSIGFDVADGPEIETDWYNFTALNSPENHPARSMQDTFYVDGKDADGRPLLLRTHTSPMQVRYARMNRPPIKVIAPGRTYRVDSDATHSPMFNQVEGLWIDENVSFADLKGAYTDFLKKFFERDDILVRFRPSYFPFTEPSAEIDMMFEHGKNAGKWLEISGSGQVHPTVIRNMGLDPERYIGFAFGSGLERLTMLRYGVQDLRLFFENDLRFLRQFA</sequence>
<keyword id="KW-0030">Aminoacyl-tRNA synthetase</keyword>
<keyword id="KW-0067">ATP-binding</keyword>
<keyword id="KW-0963">Cytoplasm</keyword>
<keyword id="KW-0436">Ligase</keyword>
<keyword id="KW-0460">Magnesium</keyword>
<keyword id="KW-0479">Metal-binding</keyword>
<keyword id="KW-0547">Nucleotide-binding</keyword>
<keyword id="KW-0648">Protein biosynthesis</keyword>
<feature type="chain" id="PRO_0000231969" description="Phenylalanine--tRNA ligase alpha subunit">
    <location>
        <begin position="1"/>
        <end position="337"/>
    </location>
</feature>
<feature type="binding site" evidence="1">
    <location>
        <position position="258"/>
    </location>
    <ligand>
        <name>Mg(2+)</name>
        <dbReference type="ChEBI" id="CHEBI:18420"/>
        <note>shared with beta subunit</note>
    </ligand>
</feature>